<dbReference type="EMBL" id="AJ007012">
    <property type="protein sequence ID" value="CAA07416.1"/>
    <property type="molecule type" value="mRNA"/>
</dbReference>
<dbReference type="EMBL" id="AC132268">
    <property type="status" value="NOT_ANNOTATED_CDS"/>
    <property type="molecule type" value="Genomic_DNA"/>
</dbReference>
<dbReference type="EMBL" id="AC132288">
    <property type="status" value="NOT_ANNOTATED_CDS"/>
    <property type="molecule type" value="Genomic_DNA"/>
</dbReference>
<dbReference type="EMBL" id="BC118022">
    <property type="protein sequence ID" value="AAI18023.1"/>
    <property type="status" value="ALT_FRAME"/>
    <property type="molecule type" value="mRNA"/>
</dbReference>
<dbReference type="CCDS" id="CCDS29891.1">
    <molecule id="O89032-1"/>
</dbReference>
<dbReference type="CCDS" id="CCDS50464.1">
    <molecule id="O89032-2"/>
</dbReference>
<dbReference type="RefSeq" id="NP_001158189.1">
    <molecule id="O89032-2"/>
    <property type="nucleotide sequence ID" value="NM_001164717.2"/>
</dbReference>
<dbReference type="RefSeq" id="NP_032044.2">
    <molecule id="O89032-1"/>
    <property type="nucleotide sequence ID" value="NM_008018.5"/>
</dbReference>
<dbReference type="RefSeq" id="XP_036017325.1">
    <molecule id="O89032-3"/>
    <property type="nucleotide sequence ID" value="XM_036161432.1"/>
</dbReference>
<dbReference type="SMR" id="O89032"/>
<dbReference type="BioGRID" id="199678">
    <property type="interactions" value="6"/>
</dbReference>
<dbReference type="FunCoup" id="O89032">
    <property type="interactions" value="592"/>
</dbReference>
<dbReference type="IntAct" id="O89032">
    <property type="interactions" value="2"/>
</dbReference>
<dbReference type="MINT" id="O89032"/>
<dbReference type="STRING" id="10090.ENSMUSP00000080325"/>
<dbReference type="GlyGen" id="O89032">
    <property type="glycosylation" value="3 sites, 1 N-linked glycan (1 site), 1 O-linked glycan (2 sites)"/>
</dbReference>
<dbReference type="iPTMnet" id="O89032"/>
<dbReference type="PhosphoSitePlus" id="O89032"/>
<dbReference type="jPOST" id="O89032"/>
<dbReference type="PaxDb" id="10090-ENSMUSP00000080325"/>
<dbReference type="PeptideAtlas" id="O89032"/>
<dbReference type="ProteomicsDB" id="261123">
    <molecule id="O89032-1"/>
</dbReference>
<dbReference type="ProteomicsDB" id="261124">
    <molecule id="O89032-2"/>
</dbReference>
<dbReference type="ProteomicsDB" id="261125">
    <molecule id="O89032-3"/>
</dbReference>
<dbReference type="Pumba" id="O89032"/>
<dbReference type="Antibodypedia" id="46067">
    <property type="antibodies" value="181 antibodies from 32 providers"/>
</dbReference>
<dbReference type="DNASU" id="14218"/>
<dbReference type="Ensembl" id="ENSMUST00000081619.10">
    <molecule id="O89032-1"/>
    <property type="protein sequence ID" value="ENSMUSP00000080325.3"/>
    <property type="gene ID" value="ENSMUSG00000053617.13"/>
</dbReference>
<dbReference type="Ensembl" id="ENSMUST00000111800.4">
    <molecule id="O89032-2"/>
    <property type="protein sequence ID" value="ENSMUSP00000107430.3"/>
    <property type="gene ID" value="ENSMUSG00000053617.13"/>
</dbReference>
<dbReference type="GeneID" id="14218"/>
<dbReference type="KEGG" id="mmu:14218"/>
<dbReference type="UCSC" id="uc008huy.2">
    <molecule id="O89032-1"/>
    <property type="organism name" value="mouse"/>
</dbReference>
<dbReference type="UCSC" id="uc008hva.2">
    <molecule id="O89032-2"/>
    <property type="organism name" value="mouse"/>
</dbReference>
<dbReference type="AGR" id="MGI:1298393"/>
<dbReference type="CTD" id="9644"/>
<dbReference type="MGI" id="MGI:1298393">
    <property type="gene designation" value="Sh3pxd2a"/>
</dbReference>
<dbReference type="VEuPathDB" id="HostDB:ENSMUSG00000053617"/>
<dbReference type="eggNOG" id="KOG0905">
    <property type="taxonomic scope" value="Eukaryota"/>
</dbReference>
<dbReference type="GeneTree" id="ENSGT00940000157732"/>
<dbReference type="HOGENOM" id="CLU_013051_0_0_1"/>
<dbReference type="InParanoid" id="O89032"/>
<dbReference type="OMA" id="SHAIFYS"/>
<dbReference type="OrthoDB" id="10255964at2759"/>
<dbReference type="PhylomeDB" id="O89032"/>
<dbReference type="TreeFam" id="TF329347"/>
<dbReference type="Reactome" id="R-MMU-8941237">
    <property type="pathway name" value="Invadopodia formation"/>
</dbReference>
<dbReference type="BioGRID-ORCS" id="14218">
    <property type="hits" value="1 hit in 76 CRISPR screens"/>
</dbReference>
<dbReference type="ChiTaRS" id="Sh3pxd2a">
    <property type="organism name" value="mouse"/>
</dbReference>
<dbReference type="PRO" id="PR:O89032"/>
<dbReference type="Proteomes" id="UP000000589">
    <property type="component" value="Chromosome 19"/>
</dbReference>
<dbReference type="RNAct" id="O89032">
    <property type="molecule type" value="protein"/>
</dbReference>
<dbReference type="Bgee" id="ENSMUSG00000053617">
    <property type="expression patterns" value="Expressed in molar tooth and 217 other cell types or tissues"/>
</dbReference>
<dbReference type="ExpressionAtlas" id="O89032">
    <property type="expression patterns" value="baseline and differential"/>
</dbReference>
<dbReference type="GO" id="GO:0070161">
    <property type="term" value="C:anchoring junction"/>
    <property type="evidence" value="ECO:0007669"/>
    <property type="project" value="UniProtKB-KW"/>
</dbReference>
<dbReference type="GO" id="GO:0042995">
    <property type="term" value="C:cell projection"/>
    <property type="evidence" value="ECO:0007669"/>
    <property type="project" value="UniProtKB-KW"/>
</dbReference>
<dbReference type="GO" id="GO:0005737">
    <property type="term" value="C:cytoplasm"/>
    <property type="evidence" value="ECO:0000314"/>
    <property type="project" value="UniProtKB"/>
</dbReference>
<dbReference type="GO" id="GO:0005829">
    <property type="term" value="C:cytosol"/>
    <property type="evidence" value="ECO:0007669"/>
    <property type="project" value="Ensembl"/>
</dbReference>
<dbReference type="GO" id="GO:0002102">
    <property type="term" value="C:podosome"/>
    <property type="evidence" value="ECO:0000314"/>
    <property type="project" value="UniProtKB"/>
</dbReference>
<dbReference type="GO" id="GO:0035091">
    <property type="term" value="F:phosphatidylinositol binding"/>
    <property type="evidence" value="ECO:0000315"/>
    <property type="project" value="UniProtKB"/>
</dbReference>
<dbReference type="GO" id="GO:0043325">
    <property type="term" value="F:phosphatidylinositol-3,4-bisphosphate binding"/>
    <property type="evidence" value="ECO:0000315"/>
    <property type="project" value="UniProtKB"/>
</dbReference>
<dbReference type="GO" id="GO:0032266">
    <property type="term" value="F:phosphatidylinositol-3-phosphate binding"/>
    <property type="evidence" value="ECO:0000315"/>
    <property type="project" value="UniProtKB"/>
</dbReference>
<dbReference type="GO" id="GO:0005546">
    <property type="term" value="F:phosphatidylinositol-4,5-bisphosphate binding"/>
    <property type="evidence" value="ECO:0000315"/>
    <property type="project" value="UniProtKB"/>
</dbReference>
<dbReference type="GO" id="GO:0070273">
    <property type="term" value="F:phosphatidylinositol-4-phosphate binding"/>
    <property type="evidence" value="ECO:0000315"/>
    <property type="project" value="UniProtKB"/>
</dbReference>
<dbReference type="GO" id="GO:0010314">
    <property type="term" value="F:phosphatidylinositol-5-phosphate binding"/>
    <property type="evidence" value="ECO:0000315"/>
    <property type="project" value="UniProtKB"/>
</dbReference>
<dbReference type="GO" id="GO:0002020">
    <property type="term" value="F:protease binding"/>
    <property type="evidence" value="ECO:0000353"/>
    <property type="project" value="UniProtKB"/>
</dbReference>
<dbReference type="GO" id="GO:0001701">
    <property type="term" value="P:in utero embryonic development"/>
    <property type="evidence" value="ECO:0000315"/>
    <property type="project" value="MGI"/>
</dbReference>
<dbReference type="GO" id="GO:0072675">
    <property type="term" value="P:osteoclast fusion"/>
    <property type="evidence" value="ECO:0007669"/>
    <property type="project" value="Ensembl"/>
</dbReference>
<dbReference type="GO" id="GO:0072593">
    <property type="term" value="P:reactive oxygen species metabolic process"/>
    <property type="evidence" value="ECO:0000315"/>
    <property type="project" value="UniProtKB"/>
</dbReference>
<dbReference type="GO" id="GO:0006801">
    <property type="term" value="P:superoxide metabolic process"/>
    <property type="evidence" value="ECO:0007669"/>
    <property type="project" value="Ensembl"/>
</dbReference>
<dbReference type="CDD" id="cd06888">
    <property type="entry name" value="PX_FISH"/>
    <property type="match status" value="1"/>
</dbReference>
<dbReference type="CDD" id="cd12074">
    <property type="entry name" value="SH3_Tks5_1"/>
    <property type="match status" value="1"/>
</dbReference>
<dbReference type="CDD" id="cd12077">
    <property type="entry name" value="SH3_Tks5_2"/>
    <property type="match status" value="1"/>
</dbReference>
<dbReference type="CDD" id="cd12079">
    <property type="entry name" value="SH3_Tks5_3"/>
    <property type="match status" value="1"/>
</dbReference>
<dbReference type="CDD" id="cd12019">
    <property type="entry name" value="SH3_Tks5_4"/>
    <property type="match status" value="1"/>
</dbReference>
<dbReference type="CDD" id="cd12020">
    <property type="entry name" value="SH3_Tks5_5"/>
    <property type="match status" value="1"/>
</dbReference>
<dbReference type="FunFam" id="2.30.30.40:FF:000020">
    <property type="entry name" value="SH3 and PX domain-containing protein 2A"/>
    <property type="match status" value="1"/>
</dbReference>
<dbReference type="FunFam" id="2.30.30.40:FF:000031">
    <property type="entry name" value="SH3 and PX domain-containing protein 2A"/>
    <property type="match status" value="1"/>
</dbReference>
<dbReference type="FunFam" id="2.30.30.40:FF:000042">
    <property type="entry name" value="SH3 and PX domain-containing protein 2A"/>
    <property type="match status" value="1"/>
</dbReference>
<dbReference type="FunFam" id="2.30.30.40:FF:000059">
    <property type="entry name" value="SH3 and PX domain-containing protein 2A"/>
    <property type="match status" value="1"/>
</dbReference>
<dbReference type="FunFam" id="3.30.1520.10:FF:000005">
    <property type="entry name" value="SH3 and PX domain-containing protein 2B"/>
    <property type="match status" value="1"/>
</dbReference>
<dbReference type="FunFam" id="2.30.30.40:FF:000194">
    <property type="entry name" value="SH3 and PX domains 2A"/>
    <property type="match status" value="1"/>
</dbReference>
<dbReference type="Gene3D" id="3.30.1520.10">
    <property type="entry name" value="Phox-like domain"/>
    <property type="match status" value="1"/>
</dbReference>
<dbReference type="Gene3D" id="2.30.30.40">
    <property type="entry name" value="SH3 Domains"/>
    <property type="match status" value="5"/>
</dbReference>
<dbReference type="InterPro" id="IPR051228">
    <property type="entry name" value="NADPH_Oxidase/PX-Domain"/>
</dbReference>
<dbReference type="InterPro" id="IPR001683">
    <property type="entry name" value="PX_dom"/>
</dbReference>
<dbReference type="InterPro" id="IPR036871">
    <property type="entry name" value="PX_dom_sf"/>
</dbReference>
<dbReference type="InterPro" id="IPR036028">
    <property type="entry name" value="SH3-like_dom_sf"/>
</dbReference>
<dbReference type="InterPro" id="IPR001452">
    <property type="entry name" value="SH3_domain"/>
</dbReference>
<dbReference type="InterPro" id="IPR037961">
    <property type="entry name" value="SH3PXD2_PX"/>
</dbReference>
<dbReference type="InterPro" id="IPR035450">
    <property type="entry name" value="SH3PXD2A_SH3_1"/>
</dbReference>
<dbReference type="InterPro" id="IPR035452">
    <property type="entry name" value="SH3PXD2A_SH3_2"/>
</dbReference>
<dbReference type="InterPro" id="IPR035449">
    <property type="entry name" value="SH3PXD2A_SH3_3"/>
</dbReference>
<dbReference type="InterPro" id="IPR035453">
    <property type="entry name" value="SH3PXD2A_SH3_4"/>
</dbReference>
<dbReference type="InterPro" id="IPR035454">
    <property type="entry name" value="SH3PXD2A_SH3_5"/>
</dbReference>
<dbReference type="PANTHER" id="PTHR15706:SF2">
    <property type="entry name" value="SH3 AND PX DOMAIN-CONTAINING PROTEIN 2A"/>
    <property type="match status" value="1"/>
</dbReference>
<dbReference type="PANTHER" id="PTHR15706">
    <property type="entry name" value="SH3 MULTIPLE DOMAIN"/>
    <property type="match status" value="1"/>
</dbReference>
<dbReference type="Pfam" id="PF00787">
    <property type="entry name" value="PX"/>
    <property type="match status" value="1"/>
</dbReference>
<dbReference type="Pfam" id="PF00018">
    <property type="entry name" value="SH3_1"/>
    <property type="match status" value="3"/>
</dbReference>
<dbReference type="Pfam" id="PF07653">
    <property type="entry name" value="SH3_2"/>
    <property type="match status" value="1"/>
</dbReference>
<dbReference type="SMART" id="SM00312">
    <property type="entry name" value="PX"/>
    <property type="match status" value="1"/>
</dbReference>
<dbReference type="SMART" id="SM00326">
    <property type="entry name" value="SH3"/>
    <property type="match status" value="5"/>
</dbReference>
<dbReference type="SUPFAM" id="SSF64268">
    <property type="entry name" value="PX domain"/>
    <property type="match status" value="1"/>
</dbReference>
<dbReference type="SUPFAM" id="SSF50044">
    <property type="entry name" value="SH3-domain"/>
    <property type="match status" value="5"/>
</dbReference>
<dbReference type="PROSITE" id="PS50195">
    <property type="entry name" value="PX"/>
    <property type="match status" value="1"/>
</dbReference>
<dbReference type="PROSITE" id="PS50002">
    <property type="entry name" value="SH3"/>
    <property type="match status" value="5"/>
</dbReference>
<keyword id="KW-0025">Alternative splicing</keyword>
<keyword id="KW-0965">Cell junction</keyword>
<keyword id="KW-0966">Cell projection</keyword>
<keyword id="KW-0175">Coiled coil</keyword>
<keyword id="KW-0963">Cytoplasm</keyword>
<keyword id="KW-0597">Phosphoprotein</keyword>
<keyword id="KW-1185">Reference proteome</keyword>
<keyword id="KW-0677">Repeat</keyword>
<keyword id="KW-0728">SH3 domain</keyword>
<evidence type="ECO:0000250" key="1"/>
<evidence type="ECO:0000250" key="2">
    <source>
        <dbReference type="UniProtKB" id="Q5TCZ1"/>
    </source>
</evidence>
<evidence type="ECO:0000255" key="3"/>
<evidence type="ECO:0000255" key="4">
    <source>
        <dbReference type="PROSITE-ProRule" id="PRU00147"/>
    </source>
</evidence>
<evidence type="ECO:0000255" key="5">
    <source>
        <dbReference type="PROSITE-ProRule" id="PRU00192"/>
    </source>
</evidence>
<evidence type="ECO:0000256" key="6">
    <source>
        <dbReference type="SAM" id="MobiDB-lite"/>
    </source>
</evidence>
<evidence type="ECO:0000269" key="7">
    <source>
    </source>
</evidence>
<evidence type="ECO:0000269" key="8">
    <source>
    </source>
</evidence>
<evidence type="ECO:0000269" key="9">
    <source>
    </source>
</evidence>
<evidence type="ECO:0000303" key="10">
    <source>
    </source>
</evidence>
<evidence type="ECO:0000305" key="11"/>
<evidence type="ECO:0000312" key="12">
    <source>
        <dbReference type="MGI" id="MGI:1298393"/>
    </source>
</evidence>
<evidence type="ECO:0007744" key="13">
    <source>
    </source>
</evidence>
<evidence type="ECO:0007744" key="14">
    <source>
    </source>
</evidence>
<comment type="function">
    <text evidence="2 7 8">Adapter protein involved in invadopodia and podosome formation, extracellular matrix degradation and invasiveness of some cancer cells. Binds matrix metalloproteinases (ADAMs), NADPH oxidases (NOXs) and phosphoinositides. Acts as an organizer protein that allows NOX1- or NOX3-dependent reactive oxygen species (ROS) generation and ROS localization. In association with ADAM12, mediates the neurotoxic effect of amyloid-beta peptide (By similarity).</text>
</comment>
<comment type="subunit">
    <text evidence="2">Interacts with ADAM12, ADAM15 and ADAM19 (By similarity). Interacts with NOXO1 (By similarity). Interacts (via SH3 domains) with NOXA1; the interaction is direct (By similarity). Interacts (via N-terminus) with CYBA. Interacts with FASLG (By similarity). Interacts (via PX domain) with RAB40B (GTP-bound); interaction promotes invadopodia-mediated extracellular matrix degradation (By similarity).</text>
</comment>
<comment type="subcellular location">
    <subcellularLocation>
        <location>Cytoplasm</location>
    </subcellularLocation>
    <subcellularLocation>
        <location evidence="2">Cell projection</location>
        <location evidence="2">Podosome</location>
    </subcellularLocation>
    <text evidence="2">Cytoplasmic in normal cells and localizes to podosomes in Src-transformed cells.</text>
</comment>
<comment type="alternative products">
    <event type="alternative splicing"/>
    <isoform>
        <id>O89032-1</id>
        <name>1</name>
        <sequence type="displayed"/>
    </isoform>
    <isoform>
        <id>O89032-2</id>
        <name>2</name>
        <sequence type="described" ref="VSP_023315"/>
    </isoform>
    <isoform>
        <id>O89032-3</id>
        <name>3</name>
        <sequence type="described" ref="VSP_023314 VSP_023315"/>
    </isoform>
    <text>Additional isoforms seem to exist.</text>
</comment>
<comment type="tissue specificity">
    <text evidence="9">Widely expressed. Not found in the spleen and testis.</text>
</comment>
<comment type="domain">
    <text evidence="2">The PX domain is required for podosome localization because of its ability to bind phosphatidylinositol 3-phosphate (PtdIns(3)P) and phosphatidylinositol 3,4-bisphosphate (PtdIns(3,4)P2) and, to a lesser extent, phosphatidylinositol 4-phosphate (PtdIns(4)P), phosphatidylinositol 5-phosphate (PtdIns(5)P), and phosphatidylinositol 3,5-bisphosphate (PtdIns(3,5)P2). Binds to the third intramolecular SH3 domain (By similarity). Required for interaction with RAB40B (By similarity).</text>
</comment>
<comment type="domain">
    <text evidence="1">The fifth SH3 domain mediates binding with ADAM12, ADAM15 and ADAM19.</text>
</comment>
<comment type="PTM">
    <text evidence="1">Tyrosine phosphorylated by SRC. Phosphorylation plays a regulatory role in the protein localization. The intramolecular interaction of the PX domain with the third SH3 domain maintains the protein in the cytoplasm and phosphorylation disrupts this interaction, resulting in the redistribution of the protein from cytoplasm to the perimembrane region. Phosphorylated on serine upon DNA damage, probably by ATM or ATR (By similarity).</text>
</comment>
<comment type="disruption phenotype">
    <text evidence="7 8">Shows significant decrease in total cellular reactive oxygen species (ROS) and in podosome formation.</text>
</comment>
<comment type="similarity">
    <text evidence="11">Belongs to the SH3PXD2 family.</text>
</comment>
<comment type="sequence caution" evidence="11">
    <conflict type="frameshift">
        <sequence resource="EMBL-CDS" id="AAI18023"/>
    </conflict>
</comment>
<protein>
    <recommendedName>
        <fullName>SH3 and PX domain-containing protein 2A</fullName>
    </recommendedName>
    <alternativeName>
        <fullName>Five SH3 domain-containing protein</fullName>
    </alternativeName>
    <alternativeName>
        <fullName>SH3 multiple domains protein 1</fullName>
    </alternativeName>
    <alternativeName>
        <fullName>Tyrosine kinase substrate with five SH3 domains</fullName>
    </alternativeName>
</protein>
<feature type="chain" id="PRO_0000278489" description="SH3 and PX domain-containing protein 2A">
    <location>
        <begin position="1"/>
        <end position="1124"/>
    </location>
</feature>
<feature type="domain" description="PX" evidence="4">
    <location>
        <begin position="4"/>
        <end position="128"/>
    </location>
</feature>
<feature type="domain" description="SH3 1" evidence="5">
    <location>
        <begin position="166"/>
        <end position="225"/>
    </location>
</feature>
<feature type="domain" description="SH3 2" evidence="5">
    <location>
        <begin position="266"/>
        <end position="325"/>
    </location>
</feature>
<feature type="domain" description="SH3 3" evidence="5">
    <location>
        <begin position="447"/>
        <end position="506"/>
    </location>
</feature>
<feature type="domain" description="SH3 4" evidence="5">
    <location>
        <begin position="833"/>
        <end position="892"/>
    </location>
</feature>
<feature type="domain" description="SH3 5" evidence="5">
    <location>
        <begin position="1063"/>
        <end position="1124"/>
    </location>
</feature>
<feature type="region of interest" description="Disordered" evidence="6">
    <location>
        <begin position="414"/>
        <end position="443"/>
    </location>
</feature>
<feature type="region of interest" description="Disordered" evidence="6">
    <location>
        <begin position="504"/>
        <end position="672"/>
    </location>
</feature>
<feature type="region of interest" description="Disordered" evidence="6">
    <location>
        <begin position="692"/>
        <end position="830"/>
    </location>
</feature>
<feature type="region of interest" description="Disordered" evidence="6">
    <location>
        <begin position="886"/>
        <end position="952"/>
    </location>
</feature>
<feature type="region of interest" description="Disordered" evidence="6">
    <location>
        <begin position="1020"/>
        <end position="1050"/>
    </location>
</feature>
<feature type="coiled-coil region" evidence="3">
    <location>
        <begin position="907"/>
        <end position="937"/>
    </location>
</feature>
<feature type="compositionally biased region" description="Basic and acidic residues" evidence="6">
    <location>
        <begin position="575"/>
        <end position="585"/>
    </location>
</feature>
<feature type="compositionally biased region" description="Acidic residues" evidence="6">
    <location>
        <begin position="607"/>
        <end position="619"/>
    </location>
</feature>
<feature type="compositionally biased region" description="Low complexity" evidence="6">
    <location>
        <begin position="633"/>
        <end position="669"/>
    </location>
</feature>
<feature type="compositionally biased region" description="Low complexity" evidence="6">
    <location>
        <begin position="692"/>
        <end position="709"/>
    </location>
</feature>
<feature type="compositionally biased region" description="Basic and acidic residues" evidence="6">
    <location>
        <begin position="713"/>
        <end position="739"/>
    </location>
</feature>
<feature type="compositionally biased region" description="Basic and acidic residues" evidence="6">
    <location>
        <begin position="912"/>
        <end position="924"/>
    </location>
</feature>
<feature type="compositionally biased region" description="Polar residues" evidence="6">
    <location>
        <begin position="926"/>
        <end position="935"/>
    </location>
</feature>
<feature type="modified residue" description="Phosphothreonine" evidence="14">
    <location>
        <position position="256"/>
    </location>
</feature>
<feature type="modified residue" description="Phosphoserine" evidence="2">
    <location>
        <position position="405"/>
    </location>
</feature>
<feature type="modified residue" description="Phosphoserine" evidence="2">
    <location>
        <position position="420"/>
    </location>
</feature>
<feature type="modified residue" description="Phosphoserine" evidence="14">
    <location>
        <position position="546"/>
    </location>
</feature>
<feature type="modified residue" description="Phosphoserine" evidence="2">
    <location>
        <position position="566"/>
    </location>
</feature>
<feature type="modified residue" description="Phosphoserine" evidence="2">
    <location>
        <position position="592"/>
    </location>
</feature>
<feature type="modified residue" description="Phosphoserine" evidence="14">
    <location>
        <position position="643"/>
    </location>
</feature>
<feature type="modified residue" description="Phosphothreonine" evidence="2">
    <location>
        <position position="728"/>
    </location>
</feature>
<feature type="modified residue" description="Phosphoserine" evidence="14">
    <location>
        <position position="764"/>
    </location>
</feature>
<feature type="modified residue" description="Phosphoserine" evidence="14">
    <location>
        <position position="766"/>
    </location>
</feature>
<feature type="modified residue" description="Phosphoserine" evidence="13 14">
    <location>
        <position position="812"/>
    </location>
</feature>
<feature type="modified residue" description="Phosphothreonine" evidence="14">
    <location>
        <position position="822"/>
    </location>
</feature>
<feature type="modified residue" description="Phosphoserine" evidence="14">
    <location>
        <position position="993"/>
    </location>
</feature>
<feature type="modified residue" description="Phosphoserine" evidence="14">
    <location>
        <position position="1007"/>
    </location>
</feature>
<feature type="modified residue" description="Phosphoserine" evidence="14">
    <location>
        <position position="1008"/>
    </location>
</feature>
<feature type="modified residue" description="Phosphoserine" evidence="14">
    <location>
        <position position="1029"/>
    </location>
</feature>
<feature type="splice variant" id="VSP_023314" description="In isoform 3." evidence="11">
    <location>
        <begin position="143"/>
        <end position="157"/>
    </location>
</feature>
<feature type="splice variant" id="VSP_023315" description="In isoform 2 and isoform 3." evidence="10">
    <location>
        <begin position="240"/>
        <end position="267"/>
    </location>
</feature>
<feature type="sequence conflict" description="In Ref. 1; CAA07416." evidence="11" ref="1">
    <original>E</original>
    <variation>V</variation>
    <location>
        <position position="867"/>
    </location>
</feature>
<proteinExistence type="evidence at protein level"/>
<accession>O89032</accession>
<accession>E9QKJ2</accession>
<accession>Q148Q8</accession>
<sequence length="1124" mass="124201">MLAYCVQDATVVDVEKRRSPSKHYVYIINVTWSDSTSQTIYRRYSKFFDLQMQLLDKFPIEGGQKDPKQRIIPFLPGKILFRRSHIRDVAVKRLKPIDEYCRALVRLPPHISQCDEVFRFFEARPEDVNPPKEDYGSSKRKSVWLSSWAESPKKDVTGADTNAEPMILEQYVVVSNYKKQENSELSLQAGEVVDVIEKNESGWWFVSTSEEQGWVPATYLEAQNGTRDDSDINTSKTGEVSKRRKAHLRRLDRRWTLGGMVNRQHSREEKYVTVQPYTSQSKDEIGFEKGVTVEVIRKNLEGWWYIRYLGKEGWAPASYLKKAKDDLPTRKKNLAGPVEIIGNIMEISNLLNKKASGDKEAPAEGEGSEAPITKKEISLPILCNASNGSALAIPERTTSKLAQGSPAVARIAPQRAQISSPNLRTRPPPRRESSLGFQLPKPPEPPSVEVEYYTIAEFQSCISDGISFRGGQKAEVIDKNSGGWWYVQIGEKEGWAPASYIDKRKKPNLSRRTSTLTRPKVPPPAPPSKPKEAEENPVGACESQGSPLKVKYEEPEYDVPAFGFDSEPEMNEEPSGDRGSGDKHPAQPRRISPASSLQRAHFKVGESSEDVALEEETIYENEGFRPYTEDTLSARGSSGDSDSPGSSSLSLAVKNSPKSDSPKSSSLLKLKAEKNAQAELGKNQSNISFSSSVTISTTCSSSSSSSSLSKNNGDLKPRSASDAGIRDTPKVGTKKDPDVKAGLASCARAKPSVRPKPVLNRAESQSQEKMDISSLRRQLRPTGQLRGGLKGSRSEDSELPPQMASEGSRRGSADIIPLTATTPPCVPKKEWEGQGATYVTCSAYQKVQDSEISFPEGAEVHVLEKAESGWWYVRFGELEGWAPSHYLVAEENQQPDTASKEGDTGKSSQNEGKSDSLEKIEKRVQALNTVNQSKRATPPIPSKPPGGFGKTSGTVAVKMRNGVRQVAVRPQSVFVSPPPKDNNLSCALRRNESLTATDSLRGVRRNSSFSTARSAAAEAKGRLAERAASQGSESPLLPTQRKGIPVSPVRPKPIEKSQFIHNNLKDVYISIADYEGDEETAGFQEGVSMEVLEKNPNGWWYCQILDEVKPFKGWVPSNYLEKKN</sequence>
<reference key="1">
    <citation type="journal article" date="1998" name="EMBO J.">
        <title>A new method for isolating tyrosine kinase substrates used to identify fish, an SH3 and PX domain-containing protein, and Src substrate.</title>
        <authorList>
            <person name="Lock P."/>
            <person name="Abram C.L."/>
            <person name="Gibson T."/>
            <person name="Courtneidge S.A."/>
        </authorList>
    </citation>
    <scope>NUCLEOTIDE SEQUENCE [MRNA] (ISOFORM 1)</scope>
    <scope>ALTERNATIVE SPLICING (ISOFORM 3)</scope>
    <scope>PTM</scope>
    <scope>TISSUE SPECIFICITY</scope>
</reference>
<reference key="2">
    <citation type="journal article" date="2009" name="PLoS Biol.">
        <title>Lineage-specific biology revealed by a finished genome assembly of the mouse.</title>
        <authorList>
            <person name="Church D.M."/>
            <person name="Goodstadt L."/>
            <person name="Hillier L.W."/>
            <person name="Zody M.C."/>
            <person name="Goldstein S."/>
            <person name="She X."/>
            <person name="Bult C.J."/>
            <person name="Agarwala R."/>
            <person name="Cherry J.L."/>
            <person name="DiCuccio M."/>
            <person name="Hlavina W."/>
            <person name="Kapustin Y."/>
            <person name="Meric P."/>
            <person name="Maglott D."/>
            <person name="Birtle Z."/>
            <person name="Marques A.C."/>
            <person name="Graves T."/>
            <person name="Zhou S."/>
            <person name="Teague B."/>
            <person name="Potamousis K."/>
            <person name="Churas C."/>
            <person name="Place M."/>
            <person name="Herschleb J."/>
            <person name="Runnheim R."/>
            <person name="Forrest D."/>
            <person name="Amos-Landgraf J."/>
            <person name="Schwartz D.C."/>
            <person name="Cheng Z."/>
            <person name="Lindblad-Toh K."/>
            <person name="Eichler E.E."/>
            <person name="Ponting C.P."/>
        </authorList>
    </citation>
    <scope>NUCLEOTIDE SEQUENCE [LARGE SCALE GENOMIC DNA]</scope>
    <source>
        <strain>C57BL/6J</strain>
    </source>
</reference>
<reference key="3">
    <citation type="journal article" date="2004" name="Genome Res.">
        <title>The status, quality, and expansion of the NIH full-length cDNA project: the Mammalian Gene Collection (MGC).</title>
        <authorList>
            <consortium name="The MGC Project Team"/>
        </authorList>
    </citation>
    <scope>NUCLEOTIDE SEQUENCE [LARGE SCALE MRNA] (ISOFORM 2)</scope>
</reference>
<reference key="4">
    <citation type="journal article" date="2007" name="Proc. Natl. Acad. Sci. U.S.A.">
        <title>Large-scale phosphorylation analysis of mouse liver.</title>
        <authorList>
            <person name="Villen J."/>
            <person name="Beausoleil S.A."/>
            <person name="Gerber S.A."/>
            <person name="Gygi S.P."/>
        </authorList>
    </citation>
    <scope>PHOSPHORYLATION [LARGE SCALE ANALYSIS] AT SER-812</scope>
    <scope>IDENTIFICATION BY MASS SPECTROMETRY [LARGE SCALE ANALYSIS]</scope>
    <source>
        <tissue>Liver</tissue>
    </source>
</reference>
<reference key="5">
    <citation type="journal article" date="2008" name="Eur. J. Cell Biol.">
        <title>A role for the podosome/invadopodia scaffold protein Tks5 in tumor growth in vivo.</title>
        <authorList>
            <person name="Blouw B."/>
            <person name="Seals D.F."/>
            <person name="Pass I."/>
            <person name="Diaz B."/>
            <person name="Courtneidge S.A."/>
        </authorList>
    </citation>
    <scope>FUNCTION</scope>
    <scope>DISRUPTION PHENOTYPE</scope>
</reference>
<reference key="6">
    <citation type="journal article" date="2009" name="Sci. Signal.">
        <title>Tks5-dependent, nox-mediated generation of reactive oxygen species is necessary for invadopodia formation.</title>
        <authorList>
            <person name="Diaz B."/>
            <person name="Shani G."/>
            <person name="Pass I."/>
            <person name="Anderson D."/>
            <person name="Quintavalle M."/>
            <person name="Courtneidge S.A."/>
        </authorList>
    </citation>
    <scope>FUNCTION</scope>
    <scope>DISRUPTION PHENOTYPE</scope>
    <scope>INTERACTION WITH CYBA</scope>
</reference>
<reference key="7">
    <citation type="journal article" date="2010" name="Cell">
        <title>A tissue-specific atlas of mouse protein phosphorylation and expression.</title>
        <authorList>
            <person name="Huttlin E.L."/>
            <person name="Jedrychowski M.P."/>
            <person name="Elias J.E."/>
            <person name="Goswami T."/>
            <person name="Rad R."/>
            <person name="Beausoleil S.A."/>
            <person name="Villen J."/>
            <person name="Haas W."/>
            <person name="Sowa M.E."/>
            <person name="Gygi S.P."/>
        </authorList>
    </citation>
    <scope>PHOSPHORYLATION [LARGE SCALE ANALYSIS] AT THR-256; SER-546; SER-643; SER-764; SER-766; SER-812; THR-822; SER-993; SER-1007; SER-1008 AND SER-1029</scope>
    <scope>IDENTIFICATION BY MASS SPECTROMETRY [LARGE SCALE ANALYSIS]</scope>
    <source>
        <tissue>Brain</tissue>
        <tissue>Brown adipose tissue</tissue>
        <tissue>Heart</tissue>
        <tissue>Kidney</tissue>
        <tissue>Liver</tissue>
        <tissue>Lung</tissue>
        <tissue>Pancreas</tissue>
        <tissue>Spleen</tissue>
    </source>
</reference>
<gene>
    <name evidence="12" type="primary">Sh3pxd2a</name>
    <name type="synonym">Fish</name>
    <name type="synonym">Sh3md1</name>
    <name type="synonym">Tks5</name>
</gene>
<name>SPD2A_MOUSE</name>
<organism>
    <name type="scientific">Mus musculus</name>
    <name type="common">Mouse</name>
    <dbReference type="NCBI Taxonomy" id="10090"/>
    <lineage>
        <taxon>Eukaryota</taxon>
        <taxon>Metazoa</taxon>
        <taxon>Chordata</taxon>
        <taxon>Craniata</taxon>
        <taxon>Vertebrata</taxon>
        <taxon>Euteleostomi</taxon>
        <taxon>Mammalia</taxon>
        <taxon>Eutheria</taxon>
        <taxon>Euarchontoglires</taxon>
        <taxon>Glires</taxon>
        <taxon>Rodentia</taxon>
        <taxon>Myomorpha</taxon>
        <taxon>Muroidea</taxon>
        <taxon>Muridae</taxon>
        <taxon>Murinae</taxon>
        <taxon>Mus</taxon>
        <taxon>Mus</taxon>
    </lineage>
</organism>